<reference key="1">
    <citation type="journal article" date="2008" name="Environ. Microbiol.">
        <title>The genome of Erwinia tasmaniensis strain Et1/99, a non-pathogenic bacterium in the genus Erwinia.</title>
        <authorList>
            <person name="Kube M."/>
            <person name="Migdoll A.M."/>
            <person name="Mueller I."/>
            <person name="Kuhl H."/>
            <person name="Beck A."/>
            <person name="Reinhardt R."/>
            <person name="Geider K."/>
        </authorList>
    </citation>
    <scope>NUCLEOTIDE SEQUENCE [LARGE SCALE GENOMIC DNA]</scope>
    <source>
        <strain>DSM 17950 / CFBP 7177 / CIP 109463 / NCPPB 4357 / Et1/99</strain>
    </source>
</reference>
<dbReference type="EC" id="3.5.2.9" evidence="1"/>
<dbReference type="EMBL" id="CU468135">
    <property type="protein sequence ID" value="CAO97360.1"/>
    <property type="molecule type" value="Genomic_DNA"/>
</dbReference>
<dbReference type="RefSeq" id="WP_012442029.1">
    <property type="nucleotide sequence ID" value="NC_010694.1"/>
</dbReference>
<dbReference type="SMR" id="B2VBP4"/>
<dbReference type="STRING" id="465817.ETA_23140"/>
<dbReference type="KEGG" id="eta:ETA_23140"/>
<dbReference type="eggNOG" id="COG1540">
    <property type="taxonomic scope" value="Bacteria"/>
</dbReference>
<dbReference type="HOGENOM" id="CLU_069535_0_0_6"/>
<dbReference type="OrthoDB" id="9773478at2"/>
<dbReference type="Proteomes" id="UP000001726">
    <property type="component" value="Chromosome"/>
</dbReference>
<dbReference type="GO" id="GO:0017168">
    <property type="term" value="F:5-oxoprolinase (ATP-hydrolyzing) activity"/>
    <property type="evidence" value="ECO:0007669"/>
    <property type="project" value="UniProtKB-UniRule"/>
</dbReference>
<dbReference type="GO" id="GO:0005524">
    <property type="term" value="F:ATP binding"/>
    <property type="evidence" value="ECO:0007669"/>
    <property type="project" value="UniProtKB-UniRule"/>
</dbReference>
<dbReference type="GO" id="GO:0005975">
    <property type="term" value="P:carbohydrate metabolic process"/>
    <property type="evidence" value="ECO:0007669"/>
    <property type="project" value="InterPro"/>
</dbReference>
<dbReference type="CDD" id="cd10800">
    <property type="entry name" value="LamB_YcsF_YbgL_like"/>
    <property type="match status" value="1"/>
</dbReference>
<dbReference type="Gene3D" id="3.20.20.370">
    <property type="entry name" value="Glycoside hydrolase/deacetylase"/>
    <property type="match status" value="1"/>
</dbReference>
<dbReference type="HAMAP" id="MF_00691">
    <property type="entry name" value="PxpA"/>
    <property type="match status" value="1"/>
</dbReference>
<dbReference type="InterPro" id="IPR011330">
    <property type="entry name" value="Glyco_hydro/deAcase_b/a-brl"/>
</dbReference>
<dbReference type="InterPro" id="IPR005501">
    <property type="entry name" value="LamB/YcsF/PxpA-like"/>
</dbReference>
<dbReference type="NCBIfam" id="NF003812">
    <property type="entry name" value="PRK05406.1-1"/>
    <property type="match status" value="1"/>
</dbReference>
<dbReference type="NCBIfam" id="NF003814">
    <property type="entry name" value="PRK05406.1-3"/>
    <property type="match status" value="1"/>
</dbReference>
<dbReference type="NCBIfam" id="NF003815">
    <property type="entry name" value="PRK05406.1-4"/>
    <property type="match status" value="1"/>
</dbReference>
<dbReference type="NCBIfam" id="NF003816">
    <property type="entry name" value="PRK05406.1-5"/>
    <property type="match status" value="1"/>
</dbReference>
<dbReference type="PANTHER" id="PTHR30292:SF0">
    <property type="entry name" value="5-OXOPROLINASE SUBUNIT A"/>
    <property type="match status" value="1"/>
</dbReference>
<dbReference type="PANTHER" id="PTHR30292">
    <property type="entry name" value="UNCHARACTERIZED PROTEIN YBGL-RELATED"/>
    <property type="match status" value="1"/>
</dbReference>
<dbReference type="Pfam" id="PF03746">
    <property type="entry name" value="LamB_YcsF"/>
    <property type="match status" value="1"/>
</dbReference>
<dbReference type="SUPFAM" id="SSF88713">
    <property type="entry name" value="Glycoside hydrolase/deacetylase"/>
    <property type="match status" value="1"/>
</dbReference>
<name>PXPA_ERWT9</name>
<proteinExistence type="inferred from homology"/>
<keyword id="KW-0067">ATP-binding</keyword>
<keyword id="KW-0378">Hydrolase</keyword>
<keyword id="KW-0547">Nucleotide-binding</keyword>
<keyword id="KW-1185">Reference proteome</keyword>
<evidence type="ECO:0000255" key="1">
    <source>
        <dbReference type="HAMAP-Rule" id="MF_00691"/>
    </source>
</evidence>
<accession>B2VBP4</accession>
<sequence>MKVDLNADLGEGCVHDRALLRLVSSANIACGFHAGDAQTMLQSVRWALESNVAIGAHPGFADRENFGRSPRHLPSETLYAQVVYQVGALKALAEGEGGKLVHVKPHGALYNQAAKDPALADAIALAVRAVDPALILVGLANSESIRAGERHGLTTRQEVFADRAYQSDGSLVARGQPGALVESDEQAIRQTLTMVQKGQVQSLSGEWVKVQADSICLHGDGPHALDFAHRLRQAFSLQGIDVSSS</sequence>
<protein>
    <recommendedName>
        <fullName evidence="1">5-oxoprolinase subunit A</fullName>
        <shortName evidence="1">5-OPase subunit A</shortName>
        <ecNumber evidence="1">3.5.2.9</ecNumber>
    </recommendedName>
    <alternativeName>
        <fullName evidence="1">5-oxoprolinase (ATP-hydrolyzing) subunit A</fullName>
    </alternativeName>
</protein>
<organism>
    <name type="scientific">Erwinia tasmaniensis (strain DSM 17950 / CFBP 7177 / CIP 109463 / NCPPB 4357 / Et1/99)</name>
    <dbReference type="NCBI Taxonomy" id="465817"/>
    <lineage>
        <taxon>Bacteria</taxon>
        <taxon>Pseudomonadati</taxon>
        <taxon>Pseudomonadota</taxon>
        <taxon>Gammaproteobacteria</taxon>
        <taxon>Enterobacterales</taxon>
        <taxon>Erwiniaceae</taxon>
        <taxon>Erwinia</taxon>
    </lineage>
</organism>
<comment type="function">
    <text evidence="1">Catalyzes the cleavage of 5-oxoproline to form L-glutamate coupled to the hydrolysis of ATP to ADP and inorganic phosphate.</text>
</comment>
<comment type="catalytic activity">
    <reaction evidence="1">
        <text>5-oxo-L-proline + ATP + 2 H2O = L-glutamate + ADP + phosphate + H(+)</text>
        <dbReference type="Rhea" id="RHEA:10348"/>
        <dbReference type="ChEBI" id="CHEBI:15377"/>
        <dbReference type="ChEBI" id="CHEBI:15378"/>
        <dbReference type="ChEBI" id="CHEBI:29985"/>
        <dbReference type="ChEBI" id="CHEBI:30616"/>
        <dbReference type="ChEBI" id="CHEBI:43474"/>
        <dbReference type="ChEBI" id="CHEBI:58402"/>
        <dbReference type="ChEBI" id="CHEBI:456216"/>
        <dbReference type="EC" id="3.5.2.9"/>
    </reaction>
</comment>
<comment type="subunit">
    <text evidence="1">Forms a complex composed of PxpA, PxpB and PxpC.</text>
</comment>
<comment type="similarity">
    <text evidence="1">Belongs to the LamB/PxpA family.</text>
</comment>
<feature type="chain" id="PRO_1000132058" description="5-oxoprolinase subunit A">
    <location>
        <begin position="1"/>
        <end position="245"/>
    </location>
</feature>
<gene>
    <name evidence="1" type="primary">pxpA</name>
    <name type="ordered locus">ETA_23140</name>
</gene>